<evidence type="ECO:0000255" key="1">
    <source>
        <dbReference type="HAMAP-Rule" id="MF_01537"/>
    </source>
</evidence>
<sequence length="94" mass="10234">MLQSNEYFSGKVKSIGFSSSSTGRASVGVMVEGEYTFSTAEPEEMTVISGALNVLLPDATDWQVYEAGSVFNVPGHSEFHLQVAEPTSYLCRYL</sequence>
<reference key="1">
    <citation type="journal article" date="2002" name="Proc. Natl. Acad. Sci. U.S.A.">
        <title>Extensive mosaic structure revealed by the complete genome sequence of uropathogenic Escherichia coli.</title>
        <authorList>
            <person name="Welch R.A."/>
            <person name="Burland V."/>
            <person name="Plunkett G. III"/>
            <person name="Redford P."/>
            <person name="Roesch P."/>
            <person name="Rasko D."/>
            <person name="Buckles E.L."/>
            <person name="Liou S.-R."/>
            <person name="Boutin A."/>
            <person name="Hackett J."/>
            <person name="Stroud D."/>
            <person name="Mayhew G.F."/>
            <person name="Rose D.J."/>
            <person name="Zhou S."/>
            <person name="Schwartz D.C."/>
            <person name="Perna N.T."/>
            <person name="Mobley H.L.T."/>
            <person name="Donnenberg M.S."/>
            <person name="Blattner F.R."/>
        </authorList>
    </citation>
    <scope>NUCLEOTIDE SEQUENCE [LARGE SCALE GENOMIC DNA]</scope>
    <source>
        <strain>CFT073 / ATCC 700928 / UPEC</strain>
    </source>
</reference>
<keyword id="KW-0328">Glycosyltransferase</keyword>
<keyword id="KW-1185">Reference proteome</keyword>
<keyword id="KW-0808">Transferase</keyword>
<gene>
    <name evidence="1" type="primary">ppnP</name>
    <name type="ordered locus">c0499</name>
</gene>
<protein>
    <recommendedName>
        <fullName evidence="1">Pyrimidine/purine nucleoside phosphorylase</fullName>
        <ecNumber evidence="1">2.4.2.1</ecNumber>
        <ecNumber evidence="1">2.4.2.2</ecNumber>
    </recommendedName>
    <alternativeName>
        <fullName evidence="1">Adenosine phosphorylase</fullName>
    </alternativeName>
    <alternativeName>
        <fullName evidence="1">Cytidine phosphorylase</fullName>
    </alternativeName>
    <alternativeName>
        <fullName evidence="1">Guanosine phosphorylase</fullName>
    </alternativeName>
    <alternativeName>
        <fullName evidence="1">Inosine phosphorylase</fullName>
    </alternativeName>
    <alternativeName>
        <fullName evidence="1">Thymidine phosphorylase</fullName>
    </alternativeName>
    <alternativeName>
        <fullName evidence="1">Uridine phosphorylase</fullName>
    </alternativeName>
    <alternativeName>
        <fullName evidence="1">Xanthosine phosphorylase</fullName>
    </alternativeName>
</protein>
<organism>
    <name type="scientific">Escherichia coli O6:H1 (strain CFT073 / ATCC 700928 / UPEC)</name>
    <dbReference type="NCBI Taxonomy" id="199310"/>
    <lineage>
        <taxon>Bacteria</taxon>
        <taxon>Pseudomonadati</taxon>
        <taxon>Pseudomonadota</taxon>
        <taxon>Gammaproteobacteria</taxon>
        <taxon>Enterobacterales</taxon>
        <taxon>Enterobacteriaceae</taxon>
        <taxon>Escherichia</taxon>
    </lineage>
</organism>
<accession>P0C038</accession>
<accession>P36768</accession>
<accession>P77343</accession>
<feature type="chain" id="PRO_0000211764" description="Pyrimidine/purine nucleoside phosphorylase">
    <location>
        <begin position="1"/>
        <end position="94"/>
    </location>
</feature>
<dbReference type="EC" id="2.4.2.1" evidence="1"/>
<dbReference type="EC" id="2.4.2.2" evidence="1"/>
<dbReference type="EMBL" id="AE014075">
    <property type="protein sequence ID" value="AAN78977.1"/>
    <property type="molecule type" value="Genomic_DNA"/>
</dbReference>
<dbReference type="RefSeq" id="WP_000941942.1">
    <property type="nucleotide sequence ID" value="NZ_CP051263.1"/>
</dbReference>
<dbReference type="SMR" id="P0C038"/>
<dbReference type="STRING" id="199310.c0499"/>
<dbReference type="GeneID" id="93777070"/>
<dbReference type="KEGG" id="ecc:c0499"/>
<dbReference type="eggNOG" id="COG3123">
    <property type="taxonomic scope" value="Bacteria"/>
</dbReference>
<dbReference type="HOGENOM" id="CLU_157874_0_0_6"/>
<dbReference type="BioCyc" id="ECOL199310:C0499-MONOMER"/>
<dbReference type="Proteomes" id="UP000001410">
    <property type="component" value="Chromosome"/>
</dbReference>
<dbReference type="GO" id="GO:0005829">
    <property type="term" value="C:cytosol"/>
    <property type="evidence" value="ECO:0007669"/>
    <property type="project" value="TreeGrafter"/>
</dbReference>
<dbReference type="GO" id="GO:0047975">
    <property type="term" value="F:guanosine phosphorylase activity"/>
    <property type="evidence" value="ECO:0007669"/>
    <property type="project" value="UniProtKB-EC"/>
</dbReference>
<dbReference type="GO" id="GO:0004731">
    <property type="term" value="F:purine-nucleoside phosphorylase activity"/>
    <property type="evidence" value="ECO:0007669"/>
    <property type="project" value="UniProtKB-UniRule"/>
</dbReference>
<dbReference type="GO" id="GO:0009032">
    <property type="term" value="F:thymidine phosphorylase activity"/>
    <property type="evidence" value="ECO:0007669"/>
    <property type="project" value="UniProtKB-EC"/>
</dbReference>
<dbReference type="GO" id="GO:0004850">
    <property type="term" value="F:uridine phosphorylase activity"/>
    <property type="evidence" value="ECO:0007669"/>
    <property type="project" value="UniProtKB-EC"/>
</dbReference>
<dbReference type="CDD" id="cd20296">
    <property type="entry name" value="cupin_PpnP-like"/>
    <property type="match status" value="1"/>
</dbReference>
<dbReference type="FunFam" id="2.60.120.10:FF:000016">
    <property type="entry name" value="Pyrimidine/purine nucleoside phosphorylase"/>
    <property type="match status" value="1"/>
</dbReference>
<dbReference type="Gene3D" id="2.60.120.10">
    <property type="entry name" value="Jelly Rolls"/>
    <property type="match status" value="1"/>
</dbReference>
<dbReference type="HAMAP" id="MF_01537">
    <property type="entry name" value="Nucleos_phosphorylase_PpnP"/>
    <property type="match status" value="1"/>
</dbReference>
<dbReference type="InterPro" id="IPR009664">
    <property type="entry name" value="Ppnp"/>
</dbReference>
<dbReference type="InterPro" id="IPR014710">
    <property type="entry name" value="RmlC-like_jellyroll"/>
</dbReference>
<dbReference type="InterPro" id="IPR011051">
    <property type="entry name" value="RmlC_Cupin_sf"/>
</dbReference>
<dbReference type="NCBIfam" id="NF007875">
    <property type="entry name" value="PRK10579.1"/>
    <property type="match status" value="1"/>
</dbReference>
<dbReference type="PANTHER" id="PTHR36540">
    <property type="entry name" value="PYRIMIDINE/PURINE NUCLEOSIDE PHOSPHORYLASE"/>
    <property type="match status" value="1"/>
</dbReference>
<dbReference type="PANTHER" id="PTHR36540:SF1">
    <property type="entry name" value="PYRIMIDINE_PURINE NUCLEOSIDE PHOSPHORYLASE"/>
    <property type="match status" value="1"/>
</dbReference>
<dbReference type="Pfam" id="PF06865">
    <property type="entry name" value="Ppnp"/>
    <property type="match status" value="1"/>
</dbReference>
<dbReference type="SUPFAM" id="SSF51182">
    <property type="entry name" value="RmlC-like cupins"/>
    <property type="match status" value="1"/>
</dbReference>
<comment type="function">
    <text evidence="1">Catalyzes the phosphorolysis of diverse nucleosides, yielding D-ribose 1-phosphate and the respective free bases. Can use uridine, adenosine, guanosine, cytidine, thymidine, inosine and xanthosine as substrates. Also catalyzes the reverse reactions.</text>
</comment>
<comment type="catalytic activity">
    <reaction evidence="1">
        <text>a purine D-ribonucleoside + phosphate = a purine nucleobase + alpha-D-ribose 1-phosphate</text>
        <dbReference type="Rhea" id="RHEA:19805"/>
        <dbReference type="ChEBI" id="CHEBI:26386"/>
        <dbReference type="ChEBI" id="CHEBI:43474"/>
        <dbReference type="ChEBI" id="CHEBI:57720"/>
        <dbReference type="ChEBI" id="CHEBI:142355"/>
        <dbReference type="EC" id="2.4.2.1"/>
    </reaction>
</comment>
<comment type="catalytic activity">
    <reaction evidence="1">
        <text>adenosine + phosphate = alpha-D-ribose 1-phosphate + adenine</text>
        <dbReference type="Rhea" id="RHEA:27642"/>
        <dbReference type="ChEBI" id="CHEBI:16335"/>
        <dbReference type="ChEBI" id="CHEBI:16708"/>
        <dbReference type="ChEBI" id="CHEBI:43474"/>
        <dbReference type="ChEBI" id="CHEBI:57720"/>
        <dbReference type="EC" id="2.4.2.1"/>
    </reaction>
</comment>
<comment type="catalytic activity">
    <reaction evidence="1">
        <text>cytidine + phosphate = cytosine + alpha-D-ribose 1-phosphate</text>
        <dbReference type="Rhea" id="RHEA:52540"/>
        <dbReference type="ChEBI" id="CHEBI:16040"/>
        <dbReference type="ChEBI" id="CHEBI:17562"/>
        <dbReference type="ChEBI" id="CHEBI:43474"/>
        <dbReference type="ChEBI" id="CHEBI:57720"/>
        <dbReference type="EC" id="2.4.2.2"/>
    </reaction>
</comment>
<comment type="catalytic activity">
    <reaction evidence="1">
        <text>guanosine + phosphate = alpha-D-ribose 1-phosphate + guanine</text>
        <dbReference type="Rhea" id="RHEA:13233"/>
        <dbReference type="ChEBI" id="CHEBI:16235"/>
        <dbReference type="ChEBI" id="CHEBI:16750"/>
        <dbReference type="ChEBI" id="CHEBI:43474"/>
        <dbReference type="ChEBI" id="CHEBI:57720"/>
        <dbReference type="EC" id="2.4.2.1"/>
    </reaction>
</comment>
<comment type="catalytic activity">
    <reaction evidence="1">
        <text>inosine + phosphate = alpha-D-ribose 1-phosphate + hypoxanthine</text>
        <dbReference type="Rhea" id="RHEA:27646"/>
        <dbReference type="ChEBI" id="CHEBI:17368"/>
        <dbReference type="ChEBI" id="CHEBI:17596"/>
        <dbReference type="ChEBI" id="CHEBI:43474"/>
        <dbReference type="ChEBI" id="CHEBI:57720"/>
        <dbReference type="EC" id="2.4.2.1"/>
    </reaction>
</comment>
<comment type="catalytic activity">
    <reaction evidence="1">
        <text>thymidine + phosphate = 2-deoxy-alpha-D-ribose 1-phosphate + thymine</text>
        <dbReference type="Rhea" id="RHEA:16037"/>
        <dbReference type="ChEBI" id="CHEBI:17748"/>
        <dbReference type="ChEBI" id="CHEBI:17821"/>
        <dbReference type="ChEBI" id="CHEBI:43474"/>
        <dbReference type="ChEBI" id="CHEBI:57259"/>
        <dbReference type="EC" id="2.4.2.2"/>
    </reaction>
</comment>
<comment type="catalytic activity">
    <reaction evidence="1">
        <text>uridine + phosphate = alpha-D-ribose 1-phosphate + uracil</text>
        <dbReference type="Rhea" id="RHEA:24388"/>
        <dbReference type="ChEBI" id="CHEBI:16704"/>
        <dbReference type="ChEBI" id="CHEBI:17568"/>
        <dbReference type="ChEBI" id="CHEBI:43474"/>
        <dbReference type="ChEBI" id="CHEBI:57720"/>
        <dbReference type="EC" id="2.4.2.2"/>
    </reaction>
</comment>
<comment type="catalytic activity">
    <reaction evidence="1">
        <text>xanthosine + phosphate = alpha-D-ribose 1-phosphate + xanthine</text>
        <dbReference type="Rhea" id="RHEA:27638"/>
        <dbReference type="ChEBI" id="CHEBI:17712"/>
        <dbReference type="ChEBI" id="CHEBI:18107"/>
        <dbReference type="ChEBI" id="CHEBI:43474"/>
        <dbReference type="ChEBI" id="CHEBI:57720"/>
        <dbReference type="EC" id="2.4.2.1"/>
    </reaction>
</comment>
<comment type="similarity">
    <text evidence="1">Belongs to the nucleoside phosphorylase PpnP family.</text>
</comment>
<proteinExistence type="inferred from homology"/>
<name>PPNP_ECOL6</name>